<gene>
    <name evidence="5" type="primary">TPS-(+)3car2</name>
</gene>
<keyword id="KW-0150">Chloroplast</keyword>
<keyword id="KW-0456">Lyase</keyword>
<keyword id="KW-0460">Magnesium</keyword>
<keyword id="KW-0479">Metal-binding</keyword>
<keyword id="KW-0934">Plastid</keyword>
<keyword id="KW-0809">Transit peptide</keyword>
<accession>R9QMR6</accession>
<reference key="1">
    <citation type="journal article" date="2013" name="BMC Plant Biol.">
        <title>Transcriptome resources and functional characterization of monoterpene synthases for two host species of the mountain pine beetle, lodgepole pine (Pinus contorta) and jack pine (Pinus banksiana).</title>
        <authorList>
            <person name="Hall D.E."/>
            <person name="Yuen M.M.S."/>
            <person name="Jancsik S."/>
            <person name="Quesada A.L."/>
            <person name="Dullat H.K."/>
            <person name="Li M."/>
            <person name="Henderson H."/>
            <person name="Arango-Velez A."/>
            <person name="Liao N.Y."/>
            <person name="Docking R.T."/>
            <person name="Chan S.K."/>
            <person name="Cooke J.E.K."/>
            <person name="Breuil C."/>
            <person name="Jones S.J.M."/>
            <person name="Keeling C.I."/>
            <person name="Bohlmann J."/>
        </authorList>
    </citation>
    <scope>NUCLEOTIDE SEQUENCE [MRNA]</scope>
    <scope>FUNCTION</scope>
    <scope>CATALYTIC ACTIVITY</scope>
    <scope>PATHWAY</scope>
</reference>
<name>3CAR2_PINBN</name>
<comment type="function">
    <text evidence="4">Monoterpene synthase (TPS) involved in the biosynthesis of monoterpene natural products included in conifer oleoresin secretions and volatile emissions; these compounds contribute to biotic and abiotic stress defense against herbivores and pathogens (PubMed:23679205). Catalyzes the conversion of (2E)-geranyl diphosphate (GPP) to (+)-3-carene (PubMed:23679205).</text>
</comment>
<comment type="catalytic activity">
    <reaction evidence="4">
        <text>(2E)-geranyl diphosphate = (+)-car-3-ene + diphosphate</text>
        <dbReference type="Rhea" id="RHEA:32539"/>
        <dbReference type="ChEBI" id="CHEBI:7"/>
        <dbReference type="ChEBI" id="CHEBI:33019"/>
        <dbReference type="ChEBI" id="CHEBI:58057"/>
        <dbReference type="EC" id="4.2.3.107"/>
    </reaction>
    <physiologicalReaction direction="left-to-right" evidence="4">
        <dbReference type="Rhea" id="RHEA:32540"/>
    </physiologicalReaction>
</comment>
<comment type="cofactor">
    <cofactor evidence="1">
        <name>Mg(2+)</name>
        <dbReference type="ChEBI" id="CHEBI:18420"/>
    </cofactor>
    <cofactor evidence="1">
        <name>Mn(2+)</name>
        <dbReference type="ChEBI" id="CHEBI:29035"/>
    </cofactor>
    <text evidence="1">Binds 3 Mg(2+) or Mn(2+) ions per subunit.</text>
</comment>
<comment type="pathway">
    <text evidence="4">Terpene metabolism; oleoresin biosynthesis.</text>
</comment>
<comment type="pathway">
    <text evidence="4">Secondary metabolite biosynthesis; terpenoid biosynthesis.</text>
</comment>
<comment type="subcellular location">
    <subcellularLocation>
        <location evidence="3">Plastid</location>
        <location evidence="3">Chloroplast</location>
    </subcellularLocation>
</comment>
<comment type="domain">
    <text evidence="6">The Asp-Asp-Xaa-Xaa-Asp/Glu (DDXXD/E) motif is important for the catalytic activity, presumably through binding to Mg(2+).</text>
</comment>
<comment type="similarity">
    <text evidence="6">Belongs to the terpene synthase family. Tpsd subfamily.</text>
</comment>
<sequence>MSLISAVPLASSCVSKSLISSVREHTALRRAIATLQMSRRGKSVAASIRMSSATAGSDDGVKRRIGDYHSNLWDDNFIQSLSSPYGASSYGEHADRLIGEVKEIFNSFSIADGELISPVNDLLQQLWMVDNVERLGIDRHFQTEIKVALDYVYRYWSEEGIGCGRDSAFTDLNTTALAFRIFRLHGYTVSSDVFEHFKDQKGQFAASANDTELQTRSVFNLFRASLIAFPEEKVLEEAEKFAAAYLKAALQTLPVSGLSREIQYVFDYRWHSNLPRLEARSYIDILADNTISGTPDANTKKLLELAKLEFNIFHSVQQKELQCLWRWWKEWGCPELTFIRHRYVEFYTLVSGIDMVPEHATFRLSCVKTCHLITILDDMYDTFGTIDELRLFTAAVKRWDPSATECLPEYMKGVYMVLYETVNEMAKEAQKSQRRDTLGYVRQALEDYIGSYLKEAEWIATGYVPTFQEYFENGKLSSGHRIATLQPILTLSIPFPHHILQEIDFPSKFNDYAASILRLRGDTRCYKADSARGEEASCISCYMRDNPGSTQEDALNLINGMIEDMIKKLNWEFLRPDNNAPISSKKHAFNISRGLHHFYNYRDGYSVASKETKDLVIKTVLEPVLM</sequence>
<organism>
    <name type="scientific">Pinus banksiana</name>
    <name type="common">Jack pine</name>
    <name type="synonym">Pinus divaricata</name>
    <dbReference type="NCBI Taxonomy" id="3353"/>
    <lineage>
        <taxon>Eukaryota</taxon>
        <taxon>Viridiplantae</taxon>
        <taxon>Streptophyta</taxon>
        <taxon>Embryophyta</taxon>
        <taxon>Tracheophyta</taxon>
        <taxon>Spermatophyta</taxon>
        <taxon>Pinopsida</taxon>
        <taxon>Pinidae</taxon>
        <taxon>Conifers I</taxon>
        <taxon>Pinales</taxon>
        <taxon>Pinaceae</taxon>
        <taxon>Pinus</taxon>
        <taxon>Pinus subgen. Pinus</taxon>
    </lineage>
</organism>
<dbReference type="EC" id="4.2.3.107" evidence="4"/>
<dbReference type="EMBL" id="JQ240306">
    <property type="protein sequence ID" value="AFU73858.1"/>
    <property type="molecule type" value="mRNA"/>
</dbReference>
<dbReference type="SMR" id="R9QMR6"/>
<dbReference type="UniPathway" id="UPA00213"/>
<dbReference type="UniPathway" id="UPA00924"/>
<dbReference type="GO" id="GO:0009507">
    <property type="term" value="C:chloroplast"/>
    <property type="evidence" value="ECO:0007669"/>
    <property type="project" value="UniProtKB-SubCell"/>
</dbReference>
<dbReference type="GO" id="GO:0000287">
    <property type="term" value="F:magnesium ion binding"/>
    <property type="evidence" value="ECO:0007669"/>
    <property type="project" value="InterPro"/>
</dbReference>
<dbReference type="GO" id="GO:0010333">
    <property type="term" value="F:terpene synthase activity"/>
    <property type="evidence" value="ECO:0000314"/>
    <property type="project" value="UniProtKB"/>
</dbReference>
<dbReference type="GO" id="GO:0016102">
    <property type="term" value="P:diterpenoid biosynthetic process"/>
    <property type="evidence" value="ECO:0007669"/>
    <property type="project" value="InterPro"/>
</dbReference>
<dbReference type="GO" id="GO:0010597">
    <property type="term" value="P:green leaf volatile biosynthetic process"/>
    <property type="evidence" value="ECO:0000314"/>
    <property type="project" value="UniProtKB"/>
</dbReference>
<dbReference type="GO" id="GO:0016114">
    <property type="term" value="P:terpenoid biosynthetic process"/>
    <property type="evidence" value="ECO:0000314"/>
    <property type="project" value="UniProtKB"/>
</dbReference>
<dbReference type="CDD" id="cd00684">
    <property type="entry name" value="Terpene_cyclase_plant_C1"/>
    <property type="match status" value="1"/>
</dbReference>
<dbReference type="FunFam" id="1.50.10.130:FF:000004">
    <property type="entry name" value="Carene synthase, chloroplastic"/>
    <property type="match status" value="1"/>
</dbReference>
<dbReference type="FunFam" id="1.10.600.10:FF:000005">
    <property type="entry name" value="Ent-kaur-16-ene synthase, chloroplastic"/>
    <property type="match status" value="1"/>
</dbReference>
<dbReference type="Gene3D" id="1.10.600.10">
    <property type="entry name" value="Farnesyl Diphosphate Synthase"/>
    <property type="match status" value="1"/>
</dbReference>
<dbReference type="Gene3D" id="1.50.10.130">
    <property type="entry name" value="Terpene synthase, N-terminal domain"/>
    <property type="match status" value="1"/>
</dbReference>
<dbReference type="InterPro" id="IPR008949">
    <property type="entry name" value="Isoprenoid_synthase_dom_sf"/>
</dbReference>
<dbReference type="InterPro" id="IPR034741">
    <property type="entry name" value="Terpene_cyclase-like_1_C"/>
</dbReference>
<dbReference type="InterPro" id="IPR044814">
    <property type="entry name" value="Terpene_cyclase_plant_C1"/>
</dbReference>
<dbReference type="InterPro" id="IPR001906">
    <property type="entry name" value="Terpene_synth_N"/>
</dbReference>
<dbReference type="InterPro" id="IPR036965">
    <property type="entry name" value="Terpene_synth_N_sf"/>
</dbReference>
<dbReference type="InterPro" id="IPR050148">
    <property type="entry name" value="Terpene_synthase-like"/>
</dbReference>
<dbReference type="InterPro" id="IPR005630">
    <property type="entry name" value="Terpene_synthase_metal-bd"/>
</dbReference>
<dbReference type="InterPro" id="IPR008930">
    <property type="entry name" value="Terpenoid_cyclase/PrenylTrfase"/>
</dbReference>
<dbReference type="PANTHER" id="PTHR31225">
    <property type="entry name" value="OS04G0344100 PROTEIN-RELATED"/>
    <property type="match status" value="1"/>
</dbReference>
<dbReference type="Pfam" id="PF01397">
    <property type="entry name" value="Terpene_synth"/>
    <property type="match status" value="1"/>
</dbReference>
<dbReference type="Pfam" id="PF03936">
    <property type="entry name" value="Terpene_synth_C"/>
    <property type="match status" value="1"/>
</dbReference>
<dbReference type="SFLD" id="SFLDS00005">
    <property type="entry name" value="Isoprenoid_Synthase_Type_I"/>
    <property type="match status" value="1"/>
</dbReference>
<dbReference type="SFLD" id="SFLDG01019">
    <property type="entry name" value="Terpene_Cyclase_Like_1_C_Termi"/>
    <property type="match status" value="1"/>
</dbReference>
<dbReference type="SFLD" id="SFLDG01014">
    <property type="entry name" value="Terpene_Cyclase_Like_1_N-term"/>
    <property type="match status" value="1"/>
</dbReference>
<dbReference type="SUPFAM" id="SSF48239">
    <property type="entry name" value="Terpenoid cyclases/Protein prenyltransferases"/>
    <property type="match status" value="1"/>
</dbReference>
<dbReference type="SUPFAM" id="SSF48576">
    <property type="entry name" value="Terpenoid synthases"/>
    <property type="match status" value="1"/>
</dbReference>
<proteinExistence type="evidence at protein level"/>
<protein>
    <recommendedName>
        <fullName evidence="5">(+)-3-carene synthase 2, chloroplastic</fullName>
        <ecNumber evidence="4">4.2.3.107</ecNumber>
    </recommendedName>
    <alternativeName>
        <fullName evidence="5">Terpene synthase (+)3car2</fullName>
        <shortName evidence="5">PbTPS-(+)3car2</shortName>
    </alternativeName>
</protein>
<evidence type="ECO:0000250" key="1">
    <source>
        <dbReference type="UniProtKB" id="A0A1C9J6A7"/>
    </source>
</evidence>
<evidence type="ECO:0000250" key="2">
    <source>
        <dbReference type="UniProtKB" id="Q40577"/>
    </source>
</evidence>
<evidence type="ECO:0000255" key="3"/>
<evidence type="ECO:0000269" key="4">
    <source>
    </source>
</evidence>
<evidence type="ECO:0000303" key="5">
    <source>
    </source>
</evidence>
<evidence type="ECO:0000305" key="6"/>
<feature type="transit peptide" description="Chloroplast" evidence="3">
    <location>
        <begin position="1"/>
        <end position="45"/>
    </location>
</feature>
<feature type="chain" id="PRO_0000455012" description="(+)-3-carene synthase 2, chloroplastic">
    <location>
        <begin position="46"/>
        <end position="626"/>
    </location>
</feature>
<feature type="short sequence motif" description="DDXXD motif" evidence="6">
    <location>
        <begin position="377"/>
        <end position="381"/>
    </location>
</feature>
<feature type="binding site" evidence="2">
    <location>
        <position position="377"/>
    </location>
    <ligand>
        <name>Mg(2+)</name>
        <dbReference type="ChEBI" id="CHEBI:18420"/>
        <label>1</label>
    </ligand>
</feature>
<feature type="binding site" evidence="2">
    <location>
        <position position="377"/>
    </location>
    <ligand>
        <name>Mg(2+)</name>
        <dbReference type="ChEBI" id="CHEBI:18420"/>
        <label>2</label>
    </ligand>
</feature>
<feature type="binding site" evidence="2">
    <location>
        <position position="381"/>
    </location>
    <ligand>
        <name>Mg(2+)</name>
        <dbReference type="ChEBI" id="CHEBI:18420"/>
        <label>1</label>
    </ligand>
</feature>
<feature type="binding site" evidence="2">
    <location>
        <position position="381"/>
    </location>
    <ligand>
        <name>Mg(2+)</name>
        <dbReference type="ChEBI" id="CHEBI:18420"/>
        <label>2</label>
    </ligand>
</feature>
<feature type="binding site" evidence="2">
    <location>
        <position position="529"/>
    </location>
    <ligand>
        <name>Mg(2+)</name>
        <dbReference type="ChEBI" id="CHEBI:18420"/>
        <label>3</label>
    </ligand>
</feature>